<sequence>MPIKNNSKNEKKIYFVIGLGRSGFWAAKYLRSLGKKVIVWESNENEELSETKEILEKLDISVCLNKQFLFEEFSECLNQIEAVVISPAIPIDHKTIIKLKEKGIEVLGEVNIAWESLKNINWIGITGTNGKTTVTHLLSHILRTNNLLAPFAGNIGTPLCKIAYSIKSKNIDWLVAELSSYQIEIATLCIKPKIGIWTTFTADHLDRHKTLDNYFKIKNSLLKQSEFRIYNYDDIHLRENFKSLSKGIWITTSSKQSDLDHCDYWINNEDFIVERQENLLSLKNFKLKGNHNTQNLLLAIAAARKIGLSPEKIKNALLSYEQLPHRMETIYQSNKLEIINDSKATNFDSSTAGIKAIKGAPIIISGGKLKSGSYIEWVNIINKKAKAVFLFGESSQTLKKLILEGGFKKDIFIFNDLSEVINYVYSYIENNQIETLLFSPSCSSFDQFRNYEERGDIFKKLIHEKFNLKLFAHKEFS</sequence>
<dbReference type="EC" id="6.3.2.9" evidence="1"/>
<dbReference type="EMBL" id="CP000552">
    <property type="protein sequence ID" value="ABM72736.1"/>
    <property type="molecule type" value="Genomic_DNA"/>
</dbReference>
<dbReference type="RefSeq" id="WP_011820832.1">
    <property type="nucleotide sequence ID" value="NC_008817.1"/>
</dbReference>
<dbReference type="SMR" id="A2BY75"/>
<dbReference type="STRING" id="167542.P9515_15291"/>
<dbReference type="GeneID" id="60200790"/>
<dbReference type="KEGG" id="pmc:P9515_15291"/>
<dbReference type="eggNOG" id="COG0771">
    <property type="taxonomic scope" value="Bacteria"/>
</dbReference>
<dbReference type="HOGENOM" id="CLU_032540_0_0_3"/>
<dbReference type="OrthoDB" id="9809796at2"/>
<dbReference type="UniPathway" id="UPA00219"/>
<dbReference type="Proteomes" id="UP000001589">
    <property type="component" value="Chromosome"/>
</dbReference>
<dbReference type="GO" id="GO:0005737">
    <property type="term" value="C:cytoplasm"/>
    <property type="evidence" value="ECO:0007669"/>
    <property type="project" value="UniProtKB-SubCell"/>
</dbReference>
<dbReference type="GO" id="GO:0005524">
    <property type="term" value="F:ATP binding"/>
    <property type="evidence" value="ECO:0007669"/>
    <property type="project" value="UniProtKB-UniRule"/>
</dbReference>
<dbReference type="GO" id="GO:0008764">
    <property type="term" value="F:UDP-N-acetylmuramoylalanine-D-glutamate ligase activity"/>
    <property type="evidence" value="ECO:0007669"/>
    <property type="project" value="UniProtKB-UniRule"/>
</dbReference>
<dbReference type="GO" id="GO:0051301">
    <property type="term" value="P:cell division"/>
    <property type="evidence" value="ECO:0007669"/>
    <property type="project" value="UniProtKB-KW"/>
</dbReference>
<dbReference type="GO" id="GO:0071555">
    <property type="term" value="P:cell wall organization"/>
    <property type="evidence" value="ECO:0007669"/>
    <property type="project" value="UniProtKB-KW"/>
</dbReference>
<dbReference type="GO" id="GO:0009252">
    <property type="term" value="P:peptidoglycan biosynthetic process"/>
    <property type="evidence" value="ECO:0007669"/>
    <property type="project" value="UniProtKB-UniRule"/>
</dbReference>
<dbReference type="GO" id="GO:0008360">
    <property type="term" value="P:regulation of cell shape"/>
    <property type="evidence" value="ECO:0007669"/>
    <property type="project" value="UniProtKB-KW"/>
</dbReference>
<dbReference type="Gene3D" id="3.90.190.20">
    <property type="entry name" value="Mur ligase, C-terminal domain"/>
    <property type="match status" value="1"/>
</dbReference>
<dbReference type="Gene3D" id="3.40.1190.10">
    <property type="entry name" value="Mur-like, catalytic domain"/>
    <property type="match status" value="1"/>
</dbReference>
<dbReference type="Gene3D" id="3.40.50.720">
    <property type="entry name" value="NAD(P)-binding Rossmann-like Domain"/>
    <property type="match status" value="1"/>
</dbReference>
<dbReference type="HAMAP" id="MF_00639">
    <property type="entry name" value="MurD"/>
    <property type="match status" value="1"/>
</dbReference>
<dbReference type="InterPro" id="IPR036565">
    <property type="entry name" value="Mur-like_cat_sf"/>
</dbReference>
<dbReference type="InterPro" id="IPR004101">
    <property type="entry name" value="Mur_ligase_C"/>
</dbReference>
<dbReference type="InterPro" id="IPR036615">
    <property type="entry name" value="Mur_ligase_C_dom_sf"/>
</dbReference>
<dbReference type="InterPro" id="IPR013221">
    <property type="entry name" value="Mur_ligase_cen"/>
</dbReference>
<dbReference type="InterPro" id="IPR005762">
    <property type="entry name" value="MurD"/>
</dbReference>
<dbReference type="NCBIfam" id="TIGR01087">
    <property type="entry name" value="murD"/>
    <property type="match status" value="1"/>
</dbReference>
<dbReference type="PANTHER" id="PTHR43692">
    <property type="entry name" value="UDP-N-ACETYLMURAMOYLALANINE--D-GLUTAMATE LIGASE"/>
    <property type="match status" value="1"/>
</dbReference>
<dbReference type="PANTHER" id="PTHR43692:SF1">
    <property type="entry name" value="UDP-N-ACETYLMURAMOYLALANINE--D-GLUTAMATE LIGASE"/>
    <property type="match status" value="1"/>
</dbReference>
<dbReference type="Pfam" id="PF02875">
    <property type="entry name" value="Mur_ligase_C"/>
    <property type="match status" value="1"/>
</dbReference>
<dbReference type="Pfam" id="PF08245">
    <property type="entry name" value="Mur_ligase_M"/>
    <property type="match status" value="1"/>
</dbReference>
<dbReference type="Pfam" id="PF21799">
    <property type="entry name" value="MurD-like_N"/>
    <property type="match status" value="1"/>
</dbReference>
<dbReference type="SUPFAM" id="SSF51984">
    <property type="entry name" value="MurCD N-terminal domain"/>
    <property type="match status" value="1"/>
</dbReference>
<dbReference type="SUPFAM" id="SSF53623">
    <property type="entry name" value="MurD-like peptide ligases, catalytic domain"/>
    <property type="match status" value="1"/>
</dbReference>
<dbReference type="SUPFAM" id="SSF53244">
    <property type="entry name" value="MurD-like peptide ligases, peptide-binding domain"/>
    <property type="match status" value="1"/>
</dbReference>
<accession>A2BY75</accession>
<gene>
    <name evidence="1" type="primary">murD</name>
    <name type="ordered locus">P9515_15291</name>
</gene>
<evidence type="ECO:0000255" key="1">
    <source>
        <dbReference type="HAMAP-Rule" id="MF_00639"/>
    </source>
</evidence>
<feature type="chain" id="PRO_0000301447" description="UDP-N-acetylmuramoylalanine--D-glutamate ligase">
    <location>
        <begin position="1"/>
        <end position="477"/>
    </location>
</feature>
<feature type="binding site" evidence="1">
    <location>
        <begin position="127"/>
        <end position="133"/>
    </location>
    <ligand>
        <name>ATP</name>
        <dbReference type="ChEBI" id="CHEBI:30616"/>
    </ligand>
</feature>
<organism>
    <name type="scientific">Prochlorococcus marinus (strain MIT 9515)</name>
    <dbReference type="NCBI Taxonomy" id="167542"/>
    <lineage>
        <taxon>Bacteria</taxon>
        <taxon>Bacillati</taxon>
        <taxon>Cyanobacteriota</taxon>
        <taxon>Cyanophyceae</taxon>
        <taxon>Synechococcales</taxon>
        <taxon>Prochlorococcaceae</taxon>
        <taxon>Prochlorococcus</taxon>
    </lineage>
</organism>
<keyword id="KW-0067">ATP-binding</keyword>
<keyword id="KW-0131">Cell cycle</keyword>
<keyword id="KW-0132">Cell division</keyword>
<keyword id="KW-0133">Cell shape</keyword>
<keyword id="KW-0961">Cell wall biogenesis/degradation</keyword>
<keyword id="KW-0963">Cytoplasm</keyword>
<keyword id="KW-0436">Ligase</keyword>
<keyword id="KW-0547">Nucleotide-binding</keyword>
<keyword id="KW-0573">Peptidoglycan synthesis</keyword>
<reference key="1">
    <citation type="journal article" date="2007" name="PLoS Genet.">
        <title>Patterns and implications of gene gain and loss in the evolution of Prochlorococcus.</title>
        <authorList>
            <person name="Kettler G.C."/>
            <person name="Martiny A.C."/>
            <person name="Huang K."/>
            <person name="Zucker J."/>
            <person name="Coleman M.L."/>
            <person name="Rodrigue S."/>
            <person name="Chen F."/>
            <person name="Lapidus A."/>
            <person name="Ferriera S."/>
            <person name="Johnson J."/>
            <person name="Steglich C."/>
            <person name="Church G.M."/>
            <person name="Richardson P."/>
            <person name="Chisholm S.W."/>
        </authorList>
    </citation>
    <scope>NUCLEOTIDE SEQUENCE [LARGE SCALE GENOMIC DNA]</scope>
    <source>
        <strain>MIT 9515</strain>
    </source>
</reference>
<protein>
    <recommendedName>
        <fullName evidence="1">UDP-N-acetylmuramoylalanine--D-glutamate ligase</fullName>
        <ecNumber evidence="1">6.3.2.9</ecNumber>
    </recommendedName>
    <alternativeName>
        <fullName evidence="1">D-glutamic acid-adding enzyme</fullName>
    </alternativeName>
    <alternativeName>
        <fullName evidence="1">UDP-N-acetylmuramoyl-L-alanyl-D-glutamate synthetase</fullName>
    </alternativeName>
</protein>
<name>MURD_PROM5</name>
<comment type="function">
    <text evidence="1">Cell wall formation. Catalyzes the addition of glutamate to the nucleotide precursor UDP-N-acetylmuramoyl-L-alanine (UMA).</text>
</comment>
<comment type="catalytic activity">
    <reaction evidence="1">
        <text>UDP-N-acetyl-alpha-D-muramoyl-L-alanine + D-glutamate + ATP = UDP-N-acetyl-alpha-D-muramoyl-L-alanyl-D-glutamate + ADP + phosphate + H(+)</text>
        <dbReference type="Rhea" id="RHEA:16429"/>
        <dbReference type="ChEBI" id="CHEBI:15378"/>
        <dbReference type="ChEBI" id="CHEBI:29986"/>
        <dbReference type="ChEBI" id="CHEBI:30616"/>
        <dbReference type="ChEBI" id="CHEBI:43474"/>
        <dbReference type="ChEBI" id="CHEBI:83898"/>
        <dbReference type="ChEBI" id="CHEBI:83900"/>
        <dbReference type="ChEBI" id="CHEBI:456216"/>
        <dbReference type="EC" id="6.3.2.9"/>
    </reaction>
</comment>
<comment type="pathway">
    <text evidence="1">Cell wall biogenesis; peptidoglycan biosynthesis.</text>
</comment>
<comment type="subcellular location">
    <subcellularLocation>
        <location evidence="1">Cytoplasm</location>
    </subcellularLocation>
</comment>
<comment type="similarity">
    <text evidence="1">Belongs to the MurCDEF family.</text>
</comment>
<proteinExistence type="inferred from homology"/>